<dbReference type="EC" id="3.2.1.17"/>
<dbReference type="EMBL" id="AB126244">
    <property type="protein sequence ID" value="BAD02934.2"/>
    <property type="molecule type" value="mRNA"/>
</dbReference>
<dbReference type="RefSeq" id="NP_001027764.1">
    <property type="nucleotide sequence ID" value="NM_001032592.1"/>
</dbReference>
<dbReference type="SMR" id="P61133"/>
<dbReference type="FunCoup" id="P61133">
    <property type="interactions" value="767"/>
</dbReference>
<dbReference type="CAZy" id="GH23">
    <property type="family name" value="Glycoside Hydrolase Family 23"/>
</dbReference>
<dbReference type="GeneID" id="445926"/>
<dbReference type="KEGG" id="tru:445926"/>
<dbReference type="eggNOG" id="ENOG502RZXI">
    <property type="taxonomic scope" value="Eukaryota"/>
</dbReference>
<dbReference type="InParanoid" id="P61133"/>
<dbReference type="OrthoDB" id="10021790at2759"/>
<dbReference type="Proteomes" id="UP000005226">
    <property type="component" value="Unplaced"/>
</dbReference>
<dbReference type="GO" id="GO:0005576">
    <property type="term" value="C:extracellular region"/>
    <property type="evidence" value="ECO:0007669"/>
    <property type="project" value="TreeGrafter"/>
</dbReference>
<dbReference type="GO" id="GO:0003796">
    <property type="term" value="F:lysozyme activity"/>
    <property type="evidence" value="ECO:0007669"/>
    <property type="project" value="UniProtKB-EC"/>
</dbReference>
<dbReference type="GO" id="GO:0050830">
    <property type="term" value="P:defense response to Gram-positive bacterium"/>
    <property type="evidence" value="ECO:0007669"/>
    <property type="project" value="TreeGrafter"/>
</dbReference>
<dbReference type="GO" id="GO:0031640">
    <property type="term" value="P:killing of cells of another organism"/>
    <property type="evidence" value="ECO:0007669"/>
    <property type="project" value="UniProtKB-KW"/>
</dbReference>
<dbReference type="GO" id="GO:0009253">
    <property type="term" value="P:peptidoglycan catabolic process"/>
    <property type="evidence" value="ECO:0007669"/>
    <property type="project" value="InterPro"/>
</dbReference>
<dbReference type="CDD" id="cd01021">
    <property type="entry name" value="GEWL"/>
    <property type="match status" value="1"/>
</dbReference>
<dbReference type="FunFam" id="1.10.530.10:FF:000026">
    <property type="entry name" value="Lysozyme g"/>
    <property type="match status" value="1"/>
</dbReference>
<dbReference type="Gene3D" id="1.10.530.10">
    <property type="match status" value="1"/>
</dbReference>
<dbReference type="InterPro" id="IPR002152">
    <property type="entry name" value="Glyco_hydro_23"/>
</dbReference>
<dbReference type="InterPro" id="IPR023346">
    <property type="entry name" value="Lysozyme-like_dom_sf"/>
</dbReference>
<dbReference type="InterPro" id="IPR008258">
    <property type="entry name" value="Transglycosylase_SLT_dom_1"/>
</dbReference>
<dbReference type="PANTHER" id="PTHR31698:SF12">
    <property type="entry name" value="LYSOZYME G"/>
    <property type="match status" value="1"/>
</dbReference>
<dbReference type="PANTHER" id="PTHR31698">
    <property type="entry name" value="LYSOZYME G FAMILY MEMBER"/>
    <property type="match status" value="1"/>
</dbReference>
<dbReference type="Pfam" id="PF01464">
    <property type="entry name" value="SLT"/>
    <property type="match status" value="1"/>
</dbReference>
<dbReference type="PIRSF" id="PIRSF001065">
    <property type="entry name" value="Lysozyme_g"/>
    <property type="match status" value="1"/>
</dbReference>
<dbReference type="PRINTS" id="PR00749">
    <property type="entry name" value="LYSOZYMEG"/>
</dbReference>
<dbReference type="SUPFAM" id="SSF53955">
    <property type="entry name" value="Lysozyme-like"/>
    <property type="match status" value="1"/>
</dbReference>
<protein>
    <recommendedName>
        <fullName>Lysozyme g</fullName>
        <ecNumber>3.2.1.17</ecNumber>
    </recommendedName>
    <alternativeName>
        <fullName>1,4-beta-N-acetylmuramidase</fullName>
    </alternativeName>
</protein>
<name>LYG_TAKRU</name>
<proteinExistence type="evidence at transcript level"/>
<reference key="1">
    <citation type="submission" date="2004-09" db="EMBL/GenBank/DDBJ databases">
        <title>Molecular cloning, expression of chicken- and goose-type lysozyme gene of torafugu (Takifugu rubripes).</title>
        <authorList>
            <person name="Miyadai T."/>
            <person name="Ootani M."/>
            <person name="Iwata K."/>
        </authorList>
    </citation>
    <scope>NUCLEOTIDE SEQUENCE [MRNA]</scope>
    <source>
        <tissue>Pronephros</tissue>
    </source>
</reference>
<sequence>MPYGKIEDIKTSGASDVTAAQDGLKEGGWKSSHRMAEIDSNRMENYRTIINEAGRQCDVDPAVIAGIISRESRAGNQLINGWGDHGKAFGLMQIDVTPPPNGGGHTPVGTWDSLEHLIQATEILVEFIERIKTKFPRWNADQHLKGALAAYNKGEKNVESYASVDAKTTGKDYSNDVVARAQWYKSNMGF</sequence>
<keyword id="KW-0929">Antimicrobial</keyword>
<keyword id="KW-0081">Bacteriolytic enzyme</keyword>
<keyword id="KW-0326">Glycosidase</keyword>
<keyword id="KW-0378">Hydrolase</keyword>
<keyword id="KW-1185">Reference proteome</keyword>
<evidence type="ECO:0000250" key="1"/>
<evidence type="ECO:0000256" key="2">
    <source>
        <dbReference type="SAM" id="MobiDB-lite"/>
    </source>
</evidence>
<evidence type="ECO:0000305" key="3"/>
<feature type="chain" id="PRO_0000193519" description="Lysozyme g">
    <location>
        <begin position="1"/>
        <end position="190"/>
    </location>
</feature>
<feature type="region of interest" description="Disordered" evidence="2">
    <location>
        <begin position="1"/>
        <end position="31"/>
    </location>
</feature>
<feature type="compositionally biased region" description="Basic and acidic residues" evidence="2">
    <location>
        <begin position="1"/>
        <end position="10"/>
    </location>
</feature>
<feature type="active site" evidence="1">
    <location>
        <position position="71"/>
    </location>
</feature>
<feature type="active site" evidence="1">
    <location>
        <position position="84"/>
    </location>
</feature>
<comment type="catalytic activity">
    <reaction>
        <text>Hydrolysis of (1-&gt;4)-beta-linkages between N-acetylmuramic acid and N-acetyl-D-glucosamine residues in a peptidoglycan and between N-acetyl-D-glucosamine residues in chitodextrins.</text>
        <dbReference type="EC" id="3.2.1.17"/>
    </reaction>
</comment>
<comment type="similarity">
    <text evidence="3">Belongs to the glycosyl hydrolase 23 family.</text>
</comment>
<organism>
    <name type="scientific">Takifugu rubripes</name>
    <name type="common">Japanese pufferfish</name>
    <name type="synonym">Fugu rubripes</name>
    <dbReference type="NCBI Taxonomy" id="31033"/>
    <lineage>
        <taxon>Eukaryota</taxon>
        <taxon>Metazoa</taxon>
        <taxon>Chordata</taxon>
        <taxon>Craniata</taxon>
        <taxon>Vertebrata</taxon>
        <taxon>Euteleostomi</taxon>
        <taxon>Actinopterygii</taxon>
        <taxon>Neopterygii</taxon>
        <taxon>Teleostei</taxon>
        <taxon>Neoteleostei</taxon>
        <taxon>Acanthomorphata</taxon>
        <taxon>Eupercaria</taxon>
        <taxon>Tetraodontiformes</taxon>
        <taxon>Tetradontoidea</taxon>
        <taxon>Tetraodontidae</taxon>
        <taxon>Takifugu</taxon>
    </lineage>
</organism>
<accession>P61133</accession>